<evidence type="ECO:0000255" key="1">
    <source>
        <dbReference type="HAMAP-Rule" id="MF_00605"/>
    </source>
</evidence>
<name>TRMD_POLAQ</name>
<dbReference type="EC" id="2.1.1.228" evidence="1"/>
<dbReference type="EMBL" id="CP000655">
    <property type="protein sequence ID" value="ABP33739.1"/>
    <property type="molecule type" value="Genomic_DNA"/>
</dbReference>
<dbReference type="RefSeq" id="WP_011902364.1">
    <property type="nucleotide sequence ID" value="NC_009379.1"/>
</dbReference>
<dbReference type="SMR" id="A4SW75"/>
<dbReference type="GeneID" id="31480873"/>
<dbReference type="KEGG" id="pnu:Pnuc_0519"/>
<dbReference type="eggNOG" id="COG0336">
    <property type="taxonomic scope" value="Bacteria"/>
</dbReference>
<dbReference type="HOGENOM" id="CLU_047363_0_1_4"/>
<dbReference type="Proteomes" id="UP000000231">
    <property type="component" value="Chromosome"/>
</dbReference>
<dbReference type="GO" id="GO:0005829">
    <property type="term" value="C:cytosol"/>
    <property type="evidence" value="ECO:0007669"/>
    <property type="project" value="TreeGrafter"/>
</dbReference>
<dbReference type="GO" id="GO:0052906">
    <property type="term" value="F:tRNA (guanine(37)-N1)-methyltransferase activity"/>
    <property type="evidence" value="ECO:0007669"/>
    <property type="project" value="UniProtKB-UniRule"/>
</dbReference>
<dbReference type="GO" id="GO:0002939">
    <property type="term" value="P:tRNA N1-guanine methylation"/>
    <property type="evidence" value="ECO:0007669"/>
    <property type="project" value="TreeGrafter"/>
</dbReference>
<dbReference type="CDD" id="cd18080">
    <property type="entry name" value="TrmD-like"/>
    <property type="match status" value="1"/>
</dbReference>
<dbReference type="FunFam" id="1.10.1270.20:FF:000001">
    <property type="entry name" value="tRNA (guanine-N(1)-)-methyltransferase"/>
    <property type="match status" value="1"/>
</dbReference>
<dbReference type="FunFam" id="3.40.1280.10:FF:000001">
    <property type="entry name" value="tRNA (guanine-N(1)-)-methyltransferase"/>
    <property type="match status" value="1"/>
</dbReference>
<dbReference type="Gene3D" id="3.40.1280.10">
    <property type="match status" value="1"/>
</dbReference>
<dbReference type="Gene3D" id="1.10.1270.20">
    <property type="entry name" value="tRNA(m1g37)methyltransferase, domain 2"/>
    <property type="match status" value="1"/>
</dbReference>
<dbReference type="HAMAP" id="MF_00605">
    <property type="entry name" value="TrmD"/>
    <property type="match status" value="1"/>
</dbReference>
<dbReference type="InterPro" id="IPR029028">
    <property type="entry name" value="Alpha/beta_knot_MTases"/>
</dbReference>
<dbReference type="InterPro" id="IPR023148">
    <property type="entry name" value="tRNA_m1G_MeTrfase_C_sf"/>
</dbReference>
<dbReference type="InterPro" id="IPR002649">
    <property type="entry name" value="tRNA_m1G_MeTrfase_TrmD"/>
</dbReference>
<dbReference type="InterPro" id="IPR029026">
    <property type="entry name" value="tRNA_m1G_MTases_N"/>
</dbReference>
<dbReference type="InterPro" id="IPR016009">
    <property type="entry name" value="tRNA_MeTrfase_TRMD/TRM10"/>
</dbReference>
<dbReference type="NCBIfam" id="NF000648">
    <property type="entry name" value="PRK00026.1"/>
    <property type="match status" value="1"/>
</dbReference>
<dbReference type="NCBIfam" id="TIGR00088">
    <property type="entry name" value="trmD"/>
    <property type="match status" value="1"/>
</dbReference>
<dbReference type="PANTHER" id="PTHR46417">
    <property type="entry name" value="TRNA (GUANINE-N(1)-)-METHYLTRANSFERASE"/>
    <property type="match status" value="1"/>
</dbReference>
<dbReference type="PANTHER" id="PTHR46417:SF1">
    <property type="entry name" value="TRNA (GUANINE-N(1)-)-METHYLTRANSFERASE"/>
    <property type="match status" value="1"/>
</dbReference>
<dbReference type="Pfam" id="PF01746">
    <property type="entry name" value="tRNA_m1G_MT"/>
    <property type="match status" value="1"/>
</dbReference>
<dbReference type="PIRSF" id="PIRSF000386">
    <property type="entry name" value="tRNA_mtase"/>
    <property type="match status" value="1"/>
</dbReference>
<dbReference type="SUPFAM" id="SSF75217">
    <property type="entry name" value="alpha/beta knot"/>
    <property type="match status" value="1"/>
</dbReference>
<protein>
    <recommendedName>
        <fullName evidence="1">tRNA (guanine-N(1)-)-methyltransferase</fullName>
        <ecNumber evidence="1">2.1.1.228</ecNumber>
    </recommendedName>
    <alternativeName>
        <fullName evidence="1">M1G-methyltransferase</fullName>
    </alternativeName>
    <alternativeName>
        <fullName evidence="1">tRNA [GM37] methyltransferase</fullName>
    </alternativeName>
</protein>
<feature type="chain" id="PRO_1000082528" description="tRNA (guanine-N(1)-)-methyltransferase">
    <location>
        <begin position="1"/>
        <end position="248"/>
    </location>
</feature>
<feature type="binding site" evidence="1">
    <location>
        <position position="117"/>
    </location>
    <ligand>
        <name>S-adenosyl-L-methionine</name>
        <dbReference type="ChEBI" id="CHEBI:59789"/>
    </ligand>
</feature>
<feature type="binding site" evidence="1">
    <location>
        <begin position="137"/>
        <end position="142"/>
    </location>
    <ligand>
        <name>S-adenosyl-L-methionine</name>
        <dbReference type="ChEBI" id="CHEBI:59789"/>
    </ligand>
</feature>
<organism>
    <name type="scientific">Polynucleobacter asymbioticus (strain DSM 18221 / CIP 109841 / QLW-P1DMWA-1)</name>
    <name type="common">Polynucleobacter necessarius subsp. asymbioticus</name>
    <dbReference type="NCBI Taxonomy" id="312153"/>
    <lineage>
        <taxon>Bacteria</taxon>
        <taxon>Pseudomonadati</taxon>
        <taxon>Pseudomonadota</taxon>
        <taxon>Betaproteobacteria</taxon>
        <taxon>Burkholderiales</taxon>
        <taxon>Burkholderiaceae</taxon>
        <taxon>Polynucleobacter</taxon>
    </lineage>
</organism>
<proteinExistence type="inferred from homology"/>
<accession>A4SW75</accession>
<reference key="1">
    <citation type="journal article" date="2012" name="Stand. Genomic Sci.">
        <title>Complete genome sequence of Polynucleobacter necessarius subsp. asymbioticus type strain (QLW-P1DMWA-1(T)).</title>
        <authorList>
            <person name="Meincke L."/>
            <person name="Copeland A."/>
            <person name="Lapidus A."/>
            <person name="Lucas S."/>
            <person name="Berry K.W."/>
            <person name="Del Rio T.G."/>
            <person name="Hammon N."/>
            <person name="Dalin E."/>
            <person name="Tice H."/>
            <person name="Pitluck S."/>
            <person name="Richardson P."/>
            <person name="Bruce D."/>
            <person name="Goodwin L."/>
            <person name="Han C."/>
            <person name="Tapia R."/>
            <person name="Detter J.C."/>
            <person name="Schmutz J."/>
            <person name="Brettin T."/>
            <person name="Larimer F."/>
            <person name="Land M."/>
            <person name="Hauser L."/>
            <person name="Kyrpides N.C."/>
            <person name="Ivanova N."/>
            <person name="Goker M."/>
            <person name="Woyke T."/>
            <person name="Wu Q.L."/>
            <person name="Pockl M."/>
            <person name="Hahn M.W."/>
            <person name="Klenk H.P."/>
        </authorList>
    </citation>
    <scope>NUCLEOTIDE SEQUENCE [LARGE SCALE GENOMIC DNA]</scope>
    <source>
        <strain>DSM 18221 / CIP 109841 / QLW-P1DMWA-1</strain>
    </source>
</reference>
<comment type="function">
    <text evidence="1">Specifically methylates guanosine-37 in various tRNAs.</text>
</comment>
<comment type="catalytic activity">
    <reaction evidence="1">
        <text>guanosine(37) in tRNA + S-adenosyl-L-methionine = N(1)-methylguanosine(37) in tRNA + S-adenosyl-L-homocysteine + H(+)</text>
        <dbReference type="Rhea" id="RHEA:36899"/>
        <dbReference type="Rhea" id="RHEA-COMP:10145"/>
        <dbReference type="Rhea" id="RHEA-COMP:10147"/>
        <dbReference type="ChEBI" id="CHEBI:15378"/>
        <dbReference type="ChEBI" id="CHEBI:57856"/>
        <dbReference type="ChEBI" id="CHEBI:59789"/>
        <dbReference type="ChEBI" id="CHEBI:73542"/>
        <dbReference type="ChEBI" id="CHEBI:74269"/>
        <dbReference type="EC" id="2.1.1.228"/>
    </reaction>
</comment>
<comment type="subunit">
    <text evidence="1">Homodimer.</text>
</comment>
<comment type="subcellular location">
    <subcellularLocation>
        <location evidence="1">Cytoplasm</location>
    </subcellularLocation>
</comment>
<comment type="similarity">
    <text evidence="1">Belongs to the RNA methyltransferase TrmD family.</text>
</comment>
<sequence>MRFDVVTLFPEMFSALTQWGITGRACQQSLASVHLWNPRDFCPDPRKTVDDRAYGGGPGMVMMAKPLEDTVAGIQASHQAAGIKSGPICLLAPQGERFSQKIATDILDYGNLSFICGRYEAVDQRFIDRNVDIQLSIGDFVLSGGEIPAMTIMDAVIRLVPGALGDGESATQDSFMNGLLDYPHYTRPEIYENLLVPDVLLGGHHAKIADWRRQKSLELTLRLRPDLIESARANGLLTREDEQFLRSL</sequence>
<gene>
    <name evidence="1" type="primary">trmD</name>
    <name type="ordered locus">Pnuc_0519</name>
</gene>
<keyword id="KW-0963">Cytoplasm</keyword>
<keyword id="KW-0489">Methyltransferase</keyword>
<keyword id="KW-1185">Reference proteome</keyword>
<keyword id="KW-0949">S-adenosyl-L-methionine</keyword>
<keyword id="KW-0808">Transferase</keyword>
<keyword id="KW-0819">tRNA processing</keyword>